<comment type="function">
    <text evidence="1">DNA polymerase involved in damage-induced mutagenesis and translesion synthesis (TLS). It is not the major replicative DNA polymerase.</text>
</comment>
<comment type="catalytic activity">
    <reaction evidence="1">
        <text>DNA(n) + a 2'-deoxyribonucleoside 5'-triphosphate = DNA(n+1) + diphosphate</text>
        <dbReference type="Rhea" id="RHEA:22508"/>
        <dbReference type="Rhea" id="RHEA-COMP:17339"/>
        <dbReference type="Rhea" id="RHEA-COMP:17340"/>
        <dbReference type="ChEBI" id="CHEBI:33019"/>
        <dbReference type="ChEBI" id="CHEBI:61560"/>
        <dbReference type="ChEBI" id="CHEBI:173112"/>
        <dbReference type="EC" id="2.7.7.7"/>
    </reaction>
</comment>
<comment type="subcellular location">
    <subcellularLocation>
        <location evidence="1">Cytoplasm</location>
    </subcellularLocation>
</comment>
<comment type="similarity">
    <text evidence="1">Belongs to the DNA polymerase type-C family. DnaE2 subfamily.</text>
</comment>
<comment type="sequence caution" evidence="2">
    <conflict type="erroneous initiation">
        <sequence resource="EMBL-CDS" id="AAL53057"/>
    </conflict>
</comment>
<reference key="1">
    <citation type="journal article" date="2002" name="Proc. Natl. Acad. Sci. U.S.A.">
        <title>The genome sequence of the facultative intracellular pathogen Brucella melitensis.</title>
        <authorList>
            <person name="DelVecchio V.G."/>
            <person name="Kapatral V."/>
            <person name="Redkar R.J."/>
            <person name="Patra G."/>
            <person name="Mujer C."/>
            <person name="Los T."/>
            <person name="Ivanova N."/>
            <person name="Anderson I."/>
            <person name="Bhattacharyya A."/>
            <person name="Lykidis A."/>
            <person name="Reznik G."/>
            <person name="Jablonski L."/>
            <person name="Larsen N."/>
            <person name="D'Souza M."/>
            <person name="Bernal A."/>
            <person name="Mazur M."/>
            <person name="Goltsman E."/>
            <person name="Selkov E."/>
            <person name="Elzer P.H."/>
            <person name="Hagius S."/>
            <person name="O'Callaghan D."/>
            <person name="Letesson J.-J."/>
            <person name="Haselkorn R."/>
            <person name="Kyrpides N.C."/>
            <person name="Overbeek R."/>
        </authorList>
    </citation>
    <scope>NUCLEOTIDE SEQUENCE [LARGE SCALE GENOMIC DNA]</scope>
    <source>
        <strain>ATCC 23456 / CCUG 17765 / NCTC 10094 / 16M</strain>
    </source>
</reference>
<feature type="chain" id="PRO_0000103371" description="Error-prone DNA polymerase">
    <location>
        <begin position="1"/>
        <end position="1077"/>
    </location>
</feature>
<dbReference type="EC" id="2.7.7.7" evidence="1"/>
<dbReference type="EMBL" id="AE008917">
    <property type="protein sequence ID" value="AAL53057.1"/>
    <property type="status" value="ALT_INIT"/>
    <property type="molecule type" value="Genomic_DNA"/>
</dbReference>
<dbReference type="PIR" id="AF3486">
    <property type="entry name" value="AF3486"/>
</dbReference>
<dbReference type="RefSeq" id="WP_004684632.1">
    <property type="nucleotide sequence ID" value="NZ_GG703778.1"/>
</dbReference>
<dbReference type="SMR" id="Q8YEK2"/>
<dbReference type="GeneID" id="29594750"/>
<dbReference type="KEGG" id="bme:BMEI1876"/>
<dbReference type="KEGG" id="bmel:DK63_1612"/>
<dbReference type="PATRIC" id="fig|224914.52.peg.1701"/>
<dbReference type="eggNOG" id="COG0587">
    <property type="taxonomic scope" value="Bacteria"/>
</dbReference>
<dbReference type="PhylomeDB" id="Q8YEK2"/>
<dbReference type="Proteomes" id="UP000000419">
    <property type="component" value="Chromosome I"/>
</dbReference>
<dbReference type="GO" id="GO:0005737">
    <property type="term" value="C:cytoplasm"/>
    <property type="evidence" value="ECO:0007669"/>
    <property type="project" value="UniProtKB-SubCell"/>
</dbReference>
<dbReference type="GO" id="GO:0008408">
    <property type="term" value="F:3'-5' exonuclease activity"/>
    <property type="evidence" value="ECO:0007669"/>
    <property type="project" value="InterPro"/>
</dbReference>
<dbReference type="GO" id="GO:0003887">
    <property type="term" value="F:DNA-directed DNA polymerase activity"/>
    <property type="evidence" value="ECO:0007669"/>
    <property type="project" value="UniProtKB-UniRule"/>
</dbReference>
<dbReference type="GO" id="GO:0003676">
    <property type="term" value="F:nucleic acid binding"/>
    <property type="evidence" value="ECO:0007669"/>
    <property type="project" value="InterPro"/>
</dbReference>
<dbReference type="GO" id="GO:0006281">
    <property type="term" value="P:DNA repair"/>
    <property type="evidence" value="ECO:0007669"/>
    <property type="project" value="UniProtKB-UniRule"/>
</dbReference>
<dbReference type="GO" id="GO:0006260">
    <property type="term" value="P:DNA replication"/>
    <property type="evidence" value="ECO:0007669"/>
    <property type="project" value="UniProtKB-KW"/>
</dbReference>
<dbReference type="CDD" id="cd04485">
    <property type="entry name" value="DnaE_OBF"/>
    <property type="match status" value="1"/>
</dbReference>
<dbReference type="CDD" id="cd07434">
    <property type="entry name" value="PHP_PolIIIA_DnaE2"/>
    <property type="match status" value="1"/>
</dbReference>
<dbReference type="Gene3D" id="1.10.150.870">
    <property type="match status" value="1"/>
</dbReference>
<dbReference type="Gene3D" id="3.20.20.140">
    <property type="entry name" value="Metal-dependent hydrolases"/>
    <property type="match status" value="1"/>
</dbReference>
<dbReference type="Gene3D" id="2.40.50.140">
    <property type="entry name" value="Nucleic acid-binding proteins"/>
    <property type="match status" value="1"/>
</dbReference>
<dbReference type="HAMAP" id="MF_01902">
    <property type="entry name" value="DNApol_error_prone"/>
    <property type="match status" value="1"/>
</dbReference>
<dbReference type="InterPro" id="IPR011708">
    <property type="entry name" value="DNA_pol3_alpha_NTPase_dom"/>
</dbReference>
<dbReference type="InterPro" id="IPR040982">
    <property type="entry name" value="DNA_pol3_finger"/>
</dbReference>
<dbReference type="InterPro" id="IPR023073">
    <property type="entry name" value="DnaE2"/>
</dbReference>
<dbReference type="InterPro" id="IPR004805">
    <property type="entry name" value="DnaE2/DnaE/PolC"/>
</dbReference>
<dbReference type="InterPro" id="IPR029460">
    <property type="entry name" value="DNAPol_HHH"/>
</dbReference>
<dbReference type="InterPro" id="IPR012340">
    <property type="entry name" value="NA-bd_OB-fold"/>
</dbReference>
<dbReference type="InterPro" id="IPR004365">
    <property type="entry name" value="NA-bd_OB_tRNA"/>
</dbReference>
<dbReference type="InterPro" id="IPR004013">
    <property type="entry name" value="PHP_dom"/>
</dbReference>
<dbReference type="InterPro" id="IPR003141">
    <property type="entry name" value="Pol/His_phosphatase_N"/>
</dbReference>
<dbReference type="InterPro" id="IPR016195">
    <property type="entry name" value="Pol/histidinol_Pase-like"/>
</dbReference>
<dbReference type="NCBIfam" id="TIGR00594">
    <property type="entry name" value="polc"/>
    <property type="match status" value="1"/>
</dbReference>
<dbReference type="NCBIfam" id="NF004225">
    <property type="entry name" value="PRK05672.1"/>
    <property type="match status" value="1"/>
</dbReference>
<dbReference type="PANTHER" id="PTHR32294">
    <property type="entry name" value="DNA POLYMERASE III SUBUNIT ALPHA"/>
    <property type="match status" value="1"/>
</dbReference>
<dbReference type="PANTHER" id="PTHR32294:SF4">
    <property type="entry name" value="ERROR-PRONE DNA POLYMERASE"/>
    <property type="match status" value="1"/>
</dbReference>
<dbReference type="Pfam" id="PF07733">
    <property type="entry name" value="DNA_pol3_alpha"/>
    <property type="match status" value="1"/>
</dbReference>
<dbReference type="Pfam" id="PF17657">
    <property type="entry name" value="DNA_pol3_finger"/>
    <property type="match status" value="1"/>
</dbReference>
<dbReference type="Pfam" id="PF14579">
    <property type="entry name" value="HHH_6"/>
    <property type="match status" value="1"/>
</dbReference>
<dbReference type="Pfam" id="PF02811">
    <property type="entry name" value="PHP"/>
    <property type="match status" value="1"/>
</dbReference>
<dbReference type="Pfam" id="PF01336">
    <property type="entry name" value="tRNA_anti-codon"/>
    <property type="match status" value="1"/>
</dbReference>
<dbReference type="SMART" id="SM00481">
    <property type="entry name" value="POLIIIAc"/>
    <property type="match status" value="1"/>
</dbReference>
<dbReference type="SUPFAM" id="SSF89550">
    <property type="entry name" value="PHP domain-like"/>
    <property type="match status" value="1"/>
</dbReference>
<sequence length="1077" mass="120982">MVPYFEMAAASNFSFLCGASHPQELVERAHALDLSGIGIADRNTLAGVVRAHAQWKDIRKESGFRLFIGCRLSFIDGTPDMVVYPRDRAAYGQLCRLLTEGKHRAAIKGECHLEWADLLFRARQFQIAVFPPDEDEPDFAARLTEIAQAAPGSVWLALTMPHQGQDGRRAERIARFAAQAGVPLIATNDVLYHHPDRRPLQDVLTATRHHTTVFAAGRLLEKNAERHLKPPHEMVRLFRDYPEAIAATADFVAPITFQLDELKYAYPDEPIPPGKTAQQHLYDLVWEGAARHYGADMIPPKVQGLINKELALIARLEYEPYFLTVYDIVTHAREKGILCQGRGSAANSVVCFCLGITGVNPTQVDLLFERFISAERKEPPDIDVDFEHERREEVMQYVYDRYSRDRAAIVATVISYRSRSAIRDVGKALGLSEDVTAALANTVWGLSGGGIDRQHIRQAGLDPDNPIIQRAVELAITLIGFPRHLSQHVGGFVLTRDRLDETVPIGPAAMDKRSFIEWDKDDIDEVGLMKVDVLSLGMLTCIRKAFDLIHQHKPQLYGGEKLTLASLPRKDKAVYDMLCKGDSLGVFQVESRAQMNMLPRLRPQEFYDLVIEVAIVRPGPIQGDMVHPYLRRRSGQEPCTLPSPSPQHGPANELQQILGKTKGVPLFQEQAMRIAMEAAKFTPEEANQLRRAMATFRKMGTIHTMEKKMIDGMVNRGYDRTFAENCFNQIKGFGEYGFPESHAASFAHLVYISAWLKCHHPEVFAAALLNSQPMGFYAPAQIVRDAREHGVTVLPVDVNFSQWDNILEETPDVHLALRLGFRQIDGFSKRDTELLIADRQEPYRTIEDMHRRLRLDRRAFTLLADADAFGSLDIDRRAALWAVRRLPNDETLLLFRAAAASELAQEPRTKLPEMAASEHVIADYETTRLSLKGHPLQYLREGLAAEGVSTCRAVQEGADGRRMKVAGVVTVRQRPGSAKGVVFLTIEDETGIANIVIWPKIMKVFRREVMSARLIHIEGRIQRSLEGVVHLVAAKLQDRSAALIEMSGREAQRLIAPSQMAHHPRNVRVMPNSRDFH</sequence>
<name>DNAE2_BRUME</name>
<gene>
    <name evidence="1" type="primary">dnaE2</name>
    <name type="ordered locus">BMEI1876</name>
</gene>
<keyword id="KW-0963">Cytoplasm</keyword>
<keyword id="KW-0227">DNA damage</keyword>
<keyword id="KW-0234">DNA repair</keyword>
<keyword id="KW-0235">DNA replication</keyword>
<keyword id="KW-0239">DNA-directed DNA polymerase</keyword>
<keyword id="KW-0548">Nucleotidyltransferase</keyword>
<keyword id="KW-0808">Transferase</keyword>
<organism>
    <name type="scientific">Brucella melitensis biotype 1 (strain ATCC 23456 / CCUG 17765 / NCTC 10094 / 16M)</name>
    <dbReference type="NCBI Taxonomy" id="224914"/>
    <lineage>
        <taxon>Bacteria</taxon>
        <taxon>Pseudomonadati</taxon>
        <taxon>Pseudomonadota</taxon>
        <taxon>Alphaproteobacteria</taxon>
        <taxon>Hyphomicrobiales</taxon>
        <taxon>Brucellaceae</taxon>
        <taxon>Brucella/Ochrobactrum group</taxon>
        <taxon>Brucella</taxon>
    </lineage>
</organism>
<protein>
    <recommendedName>
        <fullName evidence="1">Error-prone DNA polymerase</fullName>
        <ecNumber evidence="1">2.7.7.7</ecNumber>
    </recommendedName>
</protein>
<proteinExistence type="inferred from homology"/>
<evidence type="ECO:0000255" key="1">
    <source>
        <dbReference type="HAMAP-Rule" id="MF_01902"/>
    </source>
</evidence>
<evidence type="ECO:0000305" key="2"/>
<accession>Q8YEK2</accession>